<dbReference type="EMBL" id="CH476655">
    <property type="protein sequence ID" value="EDN02957.1"/>
    <property type="molecule type" value="Genomic_DNA"/>
</dbReference>
<dbReference type="RefSeq" id="XP_001543775.1">
    <property type="nucleotide sequence ID" value="XM_001543725.1"/>
</dbReference>
<dbReference type="SMR" id="A6QTW5"/>
<dbReference type="STRING" id="339724.A6QTW5"/>
<dbReference type="TCDB" id="9.A.54.1.3">
    <property type="family name" value="the lysosomal cobalamin (b12) transporter (l-b12t) family"/>
</dbReference>
<dbReference type="GeneID" id="5450939"/>
<dbReference type="KEGG" id="aje:HCAG_00821"/>
<dbReference type="VEuPathDB" id="FungiDB:HCAG_00821"/>
<dbReference type="HOGENOM" id="CLU_028341_1_0_1"/>
<dbReference type="OMA" id="FWAQFVF"/>
<dbReference type="OrthoDB" id="9564at299071"/>
<dbReference type="Proteomes" id="UP000009297">
    <property type="component" value="Unassembled WGS sequence"/>
</dbReference>
<dbReference type="GO" id="GO:0005774">
    <property type="term" value="C:vacuolar membrane"/>
    <property type="evidence" value="ECO:0007669"/>
    <property type="project" value="TreeGrafter"/>
</dbReference>
<dbReference type="GO" id="GO:0031419">
    <property type="term" value="F:cobalamin binding"/>
    <property type="evidence" value="ECO:0007669"/>
    <property type="project" value="UniProtKB-KW"/>
</dbReference>
<dbReference type="GO" id="GO:0072665">
    <property type="term" value="P:protein localization to vacuole"/>
    <property type="evidence" value="ECO:0007669"/>
    <property type="project" value="TreeGrafter"/>
</dbReference>
<dbReference type="InterPro" id="IPR050854">
    <property type="entry name" value="LMBD1_LysCbl_Transport"/>
</dbReference>
<dbReference type="InterPro" id="IPR006876">
    <property type="entry name" value="LMBR1-like_membr_prot"/>
</dbReference>
<dbReference type="PANTHER" id="PTHR16130:SF2">
    <property type="entry name" value="LYSOSOMAL COBALAMIN TRANSPORT ESCORT PROTEIN LMBD1"/>
    <property type="match status" value="1"/>
</dbReference>
<dbReference type="PANTHER" id="PTHR16130">
    <property type="entry name" value="LYSOSOMAL COBALAMIN TRANSPORTER-RELATED"/>
    <property type="match status" value="1"/>
</dbReference>
<dbReference type="Pfam" id="PF04791">
    <property type="entry name" value="LMBR1"/>
    <property type="match status" value="1"/>
</dbReference>
<name>LMBD1_AJECN</name>
<accession>A6QTW5</accession>
<comment type="function">
    <text evidence="1">Probable lysosomal cobalamin transporter. Required to export cobalamin from lysosomes allowing its conversion to cofactors (By similarity).</text>
</comment>
<comment type="subcellular location">
    <subcellularLocation>
        <location evidence="1">Lysosome membrane</location>
        <topology evidence="1">Multi-pass membrane protein</topology>
    </subcellularLocation>
</comment>
<comment type="similarity">
    <text evidence="4">Belongs to the LIMR family. LMBRD1 subfamily.</text>
</comment>
<sequence length="590" mass="66363">MALLQSSLIWVVYAIVFFLLVAVSSIFIYIYQTPSERSTYVTTVCIFTLTALLATVLLLPVDVALVSSTTSSREGRRKSWATQDEVDKITFSLAVAYYFLYSLDAVLCLLVVPFTYFWYEEYDEVASEDGSQTFRKRFWGAFKYTVAFILLTVILFLVGFFVPIGRRKDKPNLDLDYFRRLLTENHGERALTFALGLLITIGILVYVLYTSTGLALLPVTIIKSAPAISSPTLSANTASRLEENIERQRQLEGRCGGNPDRLPSKQRRELDSLVRQARTLRRRQRLAEEARRPSGSWLLNAWFKLSAVFRPLKLLSGLLLLAIAMLVWVSMLLTSIDKAMNSICKQNCGYILGKTNILNPINWVFVHSSKVFPVDYILFVFLVLVFFCSSVVGIATTGIRFLWVRIFQLRKGHTSPQALLITTVMLTLITLALNYSISMVVAPQYATYGPQTFCDHPPKHPGEQPDCTGLEPLIKPCSELSENPTAKEICTPTVVSTFLNRITLNFPFFGIVDFWAQFFFLGLSLLVFLVTIFRTPKLDEQQFDEDAEAAEEEGLLASTGRRFGATWEDITGRASRSPQVSGSAGRGTRE</sequence>
<proteinExistence type="inferred from homology"/>
<gene>
    <name type="ORF">HCAG_00821</name>
</gene>
<keyword id="KW-0846">Cobalamin</keyword>
<keyword id="KW-0170">Cobalt</keyword>
<keyword id="KW-0458">Lysosome</keyword>
<keyword id="KW-0472">Membrane</keyword>
<keyword id="KW-1185">Reference proteome</keyword>
<keyword id="KW-0812">Transmembrane</keyword>
<keyword id="KW-1133">Transmembrane helix</keyword>
<keyword id="KW-0813">Transport</keyword>
<organism>
    <name type="scientific">Ajellomyces capsulatus (strain NAm1 / WU24)</name>
    <name type="common">Darling's disease fungus</name>
    <name type="synonym">Histoplasma capsulatum</name>
    <dbReference type="NCBI Taxonomy" id="2059318"/>
    <lineage>
        <taxon>Eukaryota</taxon>
        <taxon>Fungi</taxon>
        <taxon>Dikarya</taxon>
        <taxon>Ascomycota</taxon>
        <taxon>Pezizomycotina</taxon>
        <taxon>Eurotiomycetes</taxon>
        <taxon>Eurotiomycetidae</taxon>
        <taxon>Onygenales</taxon>
        <taxon>Ajellomycetaceae</taxon>
        <taxon>Histoplasma</taxon>
    </lineage>
</organism>
<reference key="1">
    <citation type="journal article" date="2009" name="Genome Res.">
        <title>Comparative genomic analyses of the human fungal pathogens Coccidioides and their relatives.</title>
        <authorList>
            <person name="Sharpton T.J."/>
            <person name="Stajich J.E."/>
            <person name="Rounsley S.D."/>
            <person name="Gardner M.J."/>
            <person name="Wortman J.R."/>
            <person name="Jordar V.S."/>
            <person name="Maiti R."/>
            <person name="Kodira C.D."/>
            <person name="Neafsey D.E."/>
            <person name="Zeng Q."/>
            <person name="Hung C.-Y."/>
            <person name="McMahan C."/>
            <person name="Muszewska A."/>
            <person name="Grynberg M."/>
            <person name="Mandel M.A."/>
            <person name="Kellner E.M."/>
            <person name="Barker B.M."/>
            <person name="Galgiani J.N."/>
            <person name="Orbach M.J."/>
            <person name="Kirkland T.N."/>
            <person name="Cole G.T."/>
            <person name="Henn M.R."/>
            <person name="Birren B.W."/>
            <person name="Taylor J.W."/>
        </authorList>
    </citation>
    <scope>NUCLEOTIDE SEQUENCE [LARGE SCALE GENOMIC DNA]</scope>
    <source>
        <strain>NAm1 / WU24</strain>
    </source>
</reference>
<feature type="chain" id="PRO_0000365821" description="Probable lysosomal cobalamin transporter">
    <location>
        <begin position="1"/>
        <end position="590"/>
    </location>
</feature>
<feature type="transmembrane region" description="Helical" evidence="2">
    <location>
        <begin position="8"/>
        <end position="28"/>
    </location>
</feature>
<feature type="transmembrane region" description="Helical" evidence="2">
    <location>
        <begin position="46"/>
        <end position="66"/>
    </location>
</feature>
<feature type="transmembrane region" description="Helical" evidence="2">
    <location>
        <begin position="94"/>
        <end position="114"/>
    </location>
</feature>
<feature type="transmembrane region" description="Helical" evidence="2">
    <location>
        <begin position="145"/>
        <end position="165"/>
    </location>
</feature>
<feature type="transmembrane region" description="Helical" evidence="2">
    <location>
        <begin position="190"/>
        <end position="210"/>
    </location>
</feature>
<feature type="transmembrane region" description="Helical" evidence="2">
    <location>
        <begin position="314"/>
        <end position="334"/>
    </location>
</feature>
<feature type="transmembrane region" description="Helical" evidence="2">
    <location>
        <begin position="348"/>
        <end position="367"/>
    </location>
</feature>
<feature type="transmembrane region" description="Helical" evidence="2">
    <location>
        <begin position="376"/>
        <end position="396"/>
    </location>
</feature>
<feature type="transmembrane region" description="Helical" evidence="2">
    <location>
        <begin position="421"/>
        <end position="441"/>
    </location>
</feature>
<feature type="transmembrane region" description="Helical" evidence="2">
    <location>
        <begin position="508"/>
        <end position="528"/>
    </location>
</feature>
<feature type="region of interest" description="Disordered" evidence="3">
    <location>
        <begin position="567"/>
        <end position="590"/>
    </location>
</feature>
<protein>
    <recommendedName>
        <fullName>Probable lysosomal cobalamin transporter</fullName>
    </recommendedName>
</protein>
<evidence type="ECO:0000250" key="1"/>
<evidence type="ECO:0000255" key="2"/>
<evidence type="ECO:0000256" key="3">
    <source>
        <dbReference type="SAM" id="MobiDB-lite"/>
    </source>
</evidence>
<evidence type="ECO:0000305" key="4"/>